<reference key="1">
    <citation type="journal article" date="2008" name="J. Bacteriol.">
        <title>The genome of Heliobacterium modesticaldum, a phototrophic representative of the Firmicutes containing the simplest photosynthetic apparatus.</title>
        <authorList>
            <person name="Sattley W.M."/>
            <person name="Madigan M.T."/>
            <person name="Swingley W.D."/>
            <person name="Cheung P.C."/>
            <person name="Clocksin K.M."/>
            <person name="Conrad A.L."/>
            <person name="Dejesa L.C."/>
            <person name="Honchak B.M."/>
            <person name="Jung D.O."/>
            <person name="Karbach L.E."/>
            <person name="Kurdoglu A."/>
            <person name="Lahiri S."/>
            <person name="Mastrian S.D."/>
            <person name="Page L.E."/>
            <person name="Taylor H.L."/>
            <person name="Wang Z.T."/>
            <person name="Raymond J."/>
            <person name="Chen M."/>
            <person name="Blankenship R.E."/>
            <person name="Touchman J.W."/>
        </authorList>
    </citation>
    <scope>NUCLEOTIDE SEQUENCE [LARGE SCALE GENOMIC DNA]</scope>
    <source>
        <strain>ATCC 51547 / Ice1</strain>
    </source>
</reference>
<name>ERA_HELMI</name>
<accession>B0TAF1</accession>
<evidence type="ECO:0000255" key="1">
    <source>
        <dbReference type="HAMAP-Rule" id="MF_00367"/>
    </source>
</evidence>
<evidence type="ECO:0000255" key="2">
    <source>
        <dbReference type="PROSITE-ProRule" id="PRU01050"/>
    </source>
</evidence>
<protein>
    <recommendedName>
        <fullName evidence="1">GTPase Era</fullName>
    </recommendedName>
</protein>
<dbReference type="EMBL" id="CP000930">
    <property type="protein sequence ID" value="ABZ85001.1"/>
    <property type="molecule type" value="Genomic_DNA"/>
</dbReference>
<dbReference type="RefSeq" id="WP_012283498.1">
    <property type="nucleotide sequence ID" value="NC_010337.2"/>
</dbReference>
<dbReference type="SMR" id="B0TAF1"/>
<dbReference type="STRING" id="498761.HM1_2451"/>
<dbReference type="KEGG" id="hmo:HM1_2451"/>
<dbReference type="eggNOG" id="COG1159">
    <property type="taxonomic scope" value="Bacteria"/>
</dbReference>
<dbReference type="HOGENOM" id="CLU_038009_1_0_9"/>
<dbReference type="OrthoDB" id="9805918at2"/>
<dbReference type="Proteomes" id="UP000008550">
    <property type="component" value="Chromosome"/>
</dbReference>
<dbReference type="GO" id="GO:0005829">
    <property type="term" value="C:cytosol"/>
    <property type="evidence" value="ECO:0007669"/>
    <property type="project" value="TreeGrafter"/>
</dbReference>
<dbReference type="GO" id="GO:0005886">
    <property type="term" value="C:plasma membrane"/>
    <property type="evidence" value="ECO:0007669"/>
    <property type="project" value="UniProtKB-SubCell"/>
</dbReference>
<dbReference type="GO" id="GO:0005525">
    <property type="term" value="F:GTP binding"/>
    <property type="evidence" value="ECO:0007669"/>
    <property type="project" value="UniProtKB-UniRule"/>
</dbReference>
<dbReference type="GO" id="GO:0003924">
    <property type="term" value="F:GTPase activity"/>
    <property type="evidence" value="ECO:0007669"/>
    <property type="project" value="UniProtKB-UniRule"/>
</dbReference>
<dbReference type="GO" id="GO:0043024">
    <property type="term" value="F:ribosomal small subunit binding"/>
    <property type="evidence" value="ECO:0007669"/>
    <property type="project" value="TreeGrafter"/>
</dbReference>
<dbReference type="GO" id="GO:0070181">
    <property type="term" value="F:small ribosomal subunit rRNA binding"/>
    <property type="evidence" value="ECO:0007669"/>
    <property type="project" value="UniProtKB-UniRule"/>
</dbReference>
<dbReference type="GO" id="GO:0000028">
    <property type="term" value="P:ribosomal small subunit assembly"/>
    <property type="evidence" value="ECO:0007669"/>
    <property type="project" value="TreeGrafter"/>
</dbReference>
<dbReference type="CDD" id="cd04163">
    <property type="entry name" value="Era"/>
    <property type="match status" value="1"/>
</dbReference>
<dbReference type="CDD" id="cd22534">
    <property type="entry name" value="KH-II_Era"/>
    <property type="match status" value="1"/>
</dbReference>
<dbReference type="FunFam" id="3.30.300.20:FF:000003">
    <property type="entry name" value="GTPase Era"/>
    <property type="match status" value="1"/>
</dbReference>
<dbReference type="FunFam" id="3.40.50.300:FF:000094">
    <property type="entry name" value="GTPase Era"/>
    <property type="match status" value="1"/>
</dbReference>
<dbReference type="Gene3D" id="3.30.300.20">
    <property type="match status" value="1"/>
</dbReference>
<dbReference type="Gene3D" id="3.40.50.300">
    <property type="entry name" value="P-loop containing nucleotide triphosphate hydrolases"/>
    <property type="match status" value="1"/>
</dbReference>
<dbReference type="HAMAP" id="MF_00367">
    <property type="entry name" value="GTPase_Era"/>
    <property type="match status" value="1"/>
</dbReference>
<dbReference type="InterPro" id="IPR030388">
    <property type="entry name" value="G_ERA_dom"/>
</dbReference>
<dbReference type="InterPro" id="IPR006073">
    <property type="entry name" value="GTP-bd"/>
</dbReference>
<dbReference type="InterPro" id="IPR005662">
    <property type="entry name" value="GTPase_Era-like"/>
</dbReference>
<dbReference type="InterPro" id="IPR015946">
    <property type="entry name" value="KH_dom-like_a/b"/>
</dbReference>
<dbReference type="InterPro" id="IPR004044">
    <property type="entry name" value="KH_dom_type_2"/>
</dbReference>
<dbReference type="InterPro" id="IPR009019">
    <property type="entry name" value="KH_sf_prok-type"/>
</dbReference>
<dbReference type="InterPro" id="IPR027417">
    <property type="entry name" value="P-loop_NTPase"/>
</dbReference>
<dbReference type="InterPro" id="IPR005225">
    <property type="entry name" value="Small_GTP-bd"/>
</dbReference>
<dbReference type="NCBIfam" id="TIGR00436">
    <property type="entry name" value="era"/>
    <property type="match status" value="1"/>
</dbReference>
<dbReference type="NCBIfam" id="NF000908">
    <property type="entry name" value="PRK00089.1"/>
    <property type="match status" value="1"/>
</dbReference>
<dbReference type="NCBIfam" id="TIGR00231">
    <property type="entry name" value="small_GTP"/>
    <property type="match status" value="1"/>
</dbReference>
<dbReference type="PANTHER" id="PTHR42698">
    <property type="entry name" value="GTPASE ERA"/>
    <property type="match status" value="1"/>
</dbReference>
<dbReference type="PANTHER" id="PTHR42698:SF1">
    <property type="entry name" value="GTPASE ERA, MITOCHONDRIAL"/>
    <property type="match status" value="1"/>
</dbReference>
<dbReference type="Pfam" id="PF07650">
    <property type="entry name" value="KH_2"/>
    <property type="match status" value="1"/>
</dbReference>
<dbReference type="Pfam" id="PF01926">
    <property type="entry name" value="MMR_HSR1"/>
    <property type="match status" value="1"/>
</dbReference>
<dbReference type="SUPFAM" id="SSF52540">
    <property type="entry name" value="P-loop containing nucleoside triphosphate hydrolases"/>
    <property type="match status" value="1"/>
</dbReference>
<dbReference type="SUPFAM" id="SSF54814">
    <property type="entry name" value="Prokaryotic type KH domain (KH-domain type II)"/>
    <property type="match status" value="1"/>
</dbReference>
<dbReference type="PROSITE" id="PS51713">
    <property type="entry name" value="G_ERA"/>
    <property type="match status" value="1"/>
</dbReference>
<dbReference type="PROSITE" id="PS50823">
    <property type="entry name" value="KH_TYPE_2"/>
    <property type="match status" value="1"/>
</dbReference>
<organism>
    <name type="scientific">Heliobacterium modesticaldum (strain ATCC 51547 / Ice1)</name>
    <dbReference type="NCBI Taxonomy" id="498761"/>
    <lineage>
        <taxon>Bacteria</taxon>
        <taxon>Bacillati</taxon>
        <taxon>Bacillota</taxon>
        <taxon>Clostridia</taxon>
        <taxon>Eubacteriales</taxon>
        <taxon>Heliobacteriaceae</taxon>
        <taxon>Heliomicrobium</taxon>
    </lineage>
</organism>
<proteinExistence type="inferred from homology"/>
<gene>
    <name evidence="1" type="primary">era</name>
    <name type="ordered locus">Helmi_23760</name>
    <name type="ORF">HM1_2451</name>
</gene>
<feature type="chain" id="PRO_1000121330" description="GTPase Era">
    <location>
        <begin position="1"/>
        <end position="299"/>
    </location>
</feature>
<feature type="domain" description="Era-type G" evidence="2">
    <location>
        <begin position="5"/>
        <end position="172"/>
    </location>
</feature>
<feature type="domain" description="KH type-2" evidence="1">
    <location>
        <begin position="203"/>
        <end position="280"/>
    </location>
</feature>
<feature type="region of interest" description="G1" evidence="2">
    <location>
        <begin position="13"/>
        <end position="20"/>
    </location>
</feature>
<feature type="region of interest" description="G2" evidence="2">
    <location>
        <begin position="39"/>
        <end position="43"/>
    </location>
</feature>
<feature type="region of interest" description="G3" evidence="2">
    <location>
        <begin position="60"/>
        <end position="63"/>
    </location>
</feature>
<feature type="region of interest" description="G4" evidence="2">
    <location>
        <begin position="122"/>
        <end position="125"/>
    </location>
</feature>
<feature type="region of interest" description="G5" evidence="2">
    <location>
        <begin position="151"/>
        <end position="153"/>
    </location>
</feature>
<feature type="binding site" evidence="1">
    <location>
        <begin position="13"/>
        <end position="20"/>
    </location>
    <ligand>
        <name>GTP</name>
        <dbReference type="ChEBI" id="CHEBI:37565"/>
    </ligand>
</feature>
<feature type="binding site" evidence="1">
    <location>
        <begin position="60"/>
        <end position="64"/>
    </location>
    <ligand>
        <name>GTP</name>
        <dbReference type="ChEBI" id="CHEBI:37565"/>
    </ligand>
</feature>
<feature type="binding site" evidence="1">
    <location>
        <begin position="122"/>
        <end position="125"/>
    </location>
    <ligand>
        <name>GTP</name>
        <dbReference type="ChEBI" id="CHEBI:37565"/>
    </ligand>
</feature>
<keyword id="KW-1003">Cell membrane</keyword>
<keyword id="KW-0963">Cytoplasm</keyword>
<keyword id="KW-0342">GTP-binding</keyword>
<keyword id="KW-0472">Membrane</keyword>
<keyword id="KW-0547">Nucleotide-binding</keyword>
<keyword id="KW-1185">Reference proteome</keyword>
<keyword id="KW-0690">Ribosome biogenesis</keyword>
<keyword id="KW-0694">RNA-binding</keyword>
<keyword id="KW-0699">rRNA-binding</keyword>
<sequence>MEKLRSGFISIIGRPNVGKSTLMNQLIGKKVAIMSDKPQTTRNRIVGVLNAPKGQAIFLDTPGIHKPKHKLGEIMVTTARKTLGEVDLILYVVDASEEPGGGEQFISQMLKDIKTPVFLVVNKMDTVSREEGLKKISQYSQMVAWQELIPVSAKEKTNLDRLKDLIFAKLPEGPLYYPAGSFTDQPERQLMAEMIREKVLHATREEIPHSVAVIIEHLQETPKGGMVVHATIFTERDSQKGILIGKGGSLLKEVGQKARQEIEALLGTSIYLELWVKVKKDWRQRPDVLRSFGFDEKME</sequence>
<comment type="function">
    <text evidence="1">An essential GTPase that binds both GDP and GTP, with rapid nucleotide exchange. Plays a role in 16S rRNA processing and 30S ribosomal subunit biogenesis and possibly also in cell cycle regulation and energy metabolism.</text>
</comment>
<comment type="subunit">
    <text evidence="1">Monomer.</text>
</comment>
<comment type="subcellular location">
    <subcellularLocation>
        <location>Cytoplasm</location>
    </subcellularLocation>
    <subcellularLocation>
        <location evidence="1">Cell membrane</location>
        <topology evidence="1">Peripheral membrane protein</topology>
    </subcellularLocation>
</comment>
<comment type="similarity">
    <text evidence="1 2">Belongs to the TRAFAC class TrmE-Era-EngA-EngB-Septin-like GTPase superfamily. Era GTPase family.</text>
</comment>